<comment type="function">
    <text evidence="1">Functions in trans to edit the amino acid moiety from incorrectly charged tRNA(Ala).</text>
</comment>
<comment type="cofactor">
    <cofactor evidence="3">
        <name>Zn(2+)</name>
        <dbReference type="ChEBI" id="CHEBI:29105"/>
    </cofactor>
    <text evidence="3">Binds 1 zinc ion per subunit.</text>
</comment>
<comment type="subcellular location">
    <subcellularLocation>
        <location evidence="1">Cytoplasm</location>
    </subcellularLocation>
</comment>
<comment type="similarity">
    <text evidence="3">Belongs to the class-II aminoacyl-tRNA synthetase family. Alax-L subfamily.</text>
</comment>
<accession>Q6DEJ5</accession>
<feature type="chain" id="PRO_0000277468" description="Alanyl-tRNA editing protein Aarsd1">
    <location>
        <begin position="1"/>
        <end position="412"/>
    </location>
</feature>
<feature type="binding site" evidence="2">
    <location>
        <position position="108"/>
    </location>
    <ligand>
        <name>Zn(2+)</name>
        <dbReference type="ChEBI" id="CHEBI:29105"/>
    </ligand>
</feature>
<feature type="binding site" evidence="2">
    <location>
        <position position="112"/>
    </location>
    <ligand>
        <name>Zn(2+)</name>
        <dbReference type="ChEBI" id="CHEBI:29105"/>
    </ligand>
</feature>
<feature type="binding site" evidence="2">
    <location>
        <position position="208"/>
    </location>
    <ligand>
        <name>Zn(2+)</name>
        <dbReference type="ChEBI" id="CHEBI:29105"/>
    </ligand>
</feature>
<feature type="binding site" evidence="2">
    <location>
        <position position="212"/>
    </location>
    <ligand>
        <name>Zn(2+)</name>
        <dbReference type="ChEBI" id="CHEBI:29105"/>
    </ligand>
</feature>
<organism>
    <name type="scientific">Danio rerio</name>
    <name type="common">Zebrafish</name>
    <name type="synonym">Brachydanio rerio</name>
    <dbReference type="NCBI Taxonomy" id="7955"/>
    <lineage>
        <taxon>Eukaryota</taxon>
        <taxon>Metazoa</taxon>
        <taxon>Chordata</taxon>
        <taxon>Craniata</taxon>
        <taxon>Vertebrata</taxon>
        <taxon>Euteleostomi</taxon>
        <taxon>Actinopterygii</taxon>
        <taxon>Neopterygii</taxon>
        <taxon>Teleostei</taxon>
        <taxon>Ostariophysi</taxon>
        <taxon>Cypriniformes</taxon>
        <taxon>Danionidae</taxon>
        <taxon>Danioninae</taxon>
        <taxon>Danio</taxon>
    </lineage>
</organism>
<reference key="1">
    <citation type="submission" date="2004-07" db="EMBL/GenBank/DDBJ databases">
        <authorList>
            <consortium name="NIH - Zebrafish Gene Collection (ZGC) project"/>
        </authorList>
    </citation>
    <scope>NUCLEOTIDE SEQUENCE [LARGE SCALE MRNA]</scope>
    <source>
        <tissue>Embryo</tissue>
    </source>
</reference>
<sequence length="412" mass="45517">MAFQCQRDCYMQEFDSCVVSCVPAELKLENNGRKEKLTGFNVKLKDTILFPEGGGQPDDHGTIGGVPVLRVLRQGPDAVHFVSSALEEGQEVHIKLDWERRFDHMQQHSGQHLITALADTMFGYKTTSWDLGRQRSSIELDTATVKPGEMEALETAVNEKIRAHVPVTVNLLSIDDPAVEKVRSRGLPDDHAGPIRIIDIEGVDANMCCGTHVSNLSHLQVIKILGTEKGKKNKTNLIFIAGNRVLKYAEKSYNIEKSLTVLLKTGADEHVDAVDKLQKTVKRLQKSNLTILREMAVLIAQNFKSKPDRGHFFSLHNKDGDNEFMNIVANEIGFQDTLIFMTVGDEKGAGLFLIAGPENIVTEVGPRVSELLQGKGAGKAGRYQGKANSLVKRAEVEALLKERSYKCTAGDE</sequence>
<evidence type="ECO:0000250" key="1"/>
<evidence type="ECO:0000255" key="2"/>
<evidence type="ECO:0000305" key="3"/>
<protein>
    <recommendedName>
        <fullName>Alanyl-tRNA editing protein Aarsd1</fullName>
    </recommendedName>
    <alternativeName>
        <fullName>Alanyl-tRNA synthetase domain-containing protein 1</fullName>
    </alternativeName>
</protein>
<gene>
    <name type="primary">aarsd1</name>
    <name type="ORF">zgc:101066</name>
</gene>
<name>AASD1_DANRE</name>
<proteinExistence type="evidence at transcript level"/>
<keyword id="KW-0963">Cytoplasm</keyword>
<keyword id="KW-0479">Metal-binding</keyword>
<keyword id="KW-0648">Protein biosynthesis</keyword>
<keyword id="KW-1185">Reference proteome</keyword>
<keyword id="KW-0862">Zinc</keyword>
<dbReference type="EMBL" id="BC077118">
    <property type="protein sequence ID" value="AAH77118.1"/>
    <property type="molecule type" value="mRNA"/>
</dbReference>
<dbReference type="RefSeq" id="NP_001003572.1">
    <property type="nucleotide sequence ID" value="NM_001003572.1"/>
</dbReference>
<dbReference type="SMR" id="Q6DEJ5"/>
<dbReference type="FunCoup" id="Q6DEJ5">
    <property type="interactions" value="660"/>
</dbReference>
<dbReference type="STRING" id="7955.ENSDARP00000011878"/>
<dbReference type="PaxDb" id="7955-ENSDARP00000011878"/>
<dbReference type="GeneID" id="445178"/>
<dbReference type="KEGG" id="dre:445178"/>
<dbReference type="AGR" id="ZFIN:ZDB-GENE-040801-91"/>
<dbReference type="CTD" id="80755"/>
<dbReference type="ZFIN" id="ZDB-GENE-040801-91">
    <property type="gene designation" value="aarsd1"/>
</dbReference>
<dbReference type="eggNOG" id="KOG2105">
    <property type="taxonomic scope" value="Eukaryota"/>
</dbReference>
<dbReference type="InParanoid" id="Q6DEJ5"/>
<dbReference type="OrthoDB" id="288942at2759"/>
<dbReference type="PhylomeDB" id="Q6DEJ5"/>
<dbReference type="PRO" id="PR:Q6DEJ5"/>
<dbReference type="Proteomes" id="UP000000437">
    <property type="component" value="Chromosome 12"/>
</dbReference>
<dbReference type="GO" id="GO:0005737">
    <property type="term" value="C:cytoplasm"/>
    <property type="evidence" value="ECO:0007669"/>
    <property type="project" value="UniProtKB-SubCell"/>
</dbReference>
<dbReference type="GO" id="GO:0004812">
    <property type="term" value="F:aminoacyl-tRNA ligase activity"/>
    <property type="evidence" value="ECO:0007669"/>
    <property type="project" value="InterPro"/>
</dbReference>
<dbReference type="GO" id="GO:0005524">
    <property type="term" value="F:ATP binding"/>
    <property type="evidence" value="ECO:0007669"/>
    <property type="project" value="InterPro"/>
</dbReference>
<dbReference type="GO" id="GO:0046872">
    <property type="term" value="F:metal ion binding"/>
    <property type="evidence" value="ECO:0007669"/>
    <property type="project" value="UniProtKB-KW"/>
</dbReference>
<dbReference type="GO" id="GO:0002196">
    <property type="term" value="F:Ser-tRNA(Ala) deacylase activity"/>
    <property type="evidence" value="ECO:0000318"/>
    <property type="project" value="GO_Central"/>
</dbReference>
<dbReference type="GO" id="GO:0006450">
    <property type="term" value="P:regulation of translational fidelity"/>
    <property type="evidence" value="ECO:0000318"/>
    <property type="project" value="GO_Central"/>
</dbReference>
<dbReference type="GO" id="GO:0006412">
    <property type="term" value="P:translation"/>
    <property type="evidence" value="ECO:0007669"/>
    <property type="project" value="UniProtKB-KW"/>
</dbReference>
<dbReference type="GO" id="GO:0043039">
    <property type="term" value="P:tRNA aminoacylation"/>
    <property type="evidence" value="ECO:0007669"/>
    <property type="project" value="InterPro"/>
</dbReference>
<dbReference type="FunFam" id="2.40.30.130:FF:000003">
    <property type="entry name" value="alanyl-tRNA editing protein Aarsd1"/>
    <property type="match status" value="1"/>
</dbReference>
<dbReference type="FunFam" id="3.30.980.10:FF:000007">
    <property type="entry name" value="alanyl-tRNA editing protein Aarsd1"/>
    <property type="match status" value="1"/>
</dbReference>
<dbReference type="Gene3D" id="2.40.30.130">
    <property type="match status" value="1"/>
</dbReference>
<dbReference type="Gene3D" id="3.30.980.10">
    <property type="entry name" value="Threonyl-trna Synthetase, Chain A, domain 2"/>
    <property type="match status" value="1"/>
</dbReference>
<dbReference type="InterPro" id="IPR051335">
    <property type="entry name" value="Alanyl-tRNA_Editing_Enzymes"/>
</dbReference>
<dbReference type="InterPro" id="IPR018163">
    <property type="entry name" value="Thr/Ala-tRNA-synth_IIc_edit"/>
</dbReference>
<dbReference type="InterPro" id="IPR009000">
    <property type="entry name" value="Transl_B-barrel_sf"/>
</dbReference>
<dbReference type="InterPro" id="IPR012947">
    <property type="entry name" value="tRNA_SAD"/>
</dbReference>
<dbReference type="PANTHER" id="PTHR43462">
    <property type="entry name" value="ALANYL-TRNA EDITING PROTEIN"/>
    <property type="match status" value="1"/>
</dbReference>
<dbReference type="PANTHER" id="PTHR43462:SF1">
    <property type="entry name" value="ALANYL-TRNA EDITING PROTEIN AARSD1"/>
    <property type="match status" value="1"/>
</dbReference>
<dbReference type="Pfam" id="PF07973">
    <property type="entry name" value="tRNA_SAD"/>
    <property type="match status" value="1"/>
</dbReference>
<dbReference type="SMART" id="SM00863">
    <property type="entry name" value="tRNA_SAD"/>
    <property type="match status" value="1"/>
</dbReference>
<dbReference type="SUPFAM" id="SSF55186">
    <property type="entry name" value="ThrRS/AlaRS common domain"/>
    <property type="match status" value="1"/>
</dbReference>
<dbReference type="SUPFAM" id="SSF50447">
    <property type="entry name" value="Translation proteins"/>
    <property type="match status" value="1"/>
</dbReference>